<name>RL9_STRPQ</name>
<dbReference type="EMBL" id="BA000034">
    <property type="protein sequence ID" value="BAC64927.1"/>
    <property type="molecule type" value="Genomic_DNA"/>
</dbReference>
<dbReference type="RefSeq" id="WP_002991410.1">
    <property type="nucleotide sequence ID" value="NC_004606.1"/>
</dbReference>
<dbReference type="SMR" id="P0DE61"/>
<dbReference type="GeneID" id="69901603"/>
<dbReference type="KEGG" id="sps:SPs1832"/>
<dbReference type="HOGENOM" id="CLU_078938_3_2_9"/>
<dbReference type="GO" id="GO:1990904">
    <property type="term" value="C:ribonucleoprotein complex"/>
    <property type="evidence" value="ECO:0007669"/>
    <property type="project" value="UniProtKB-KW"/>
</dbReference>
<dbReference type="GO" id="GO:0005840">
    <property type="term" value="C:ribosome"/>
    <property type="evidence" value="ECO:0007669"/>
    <property type="project" value="UniProtKB-KW"/>
</dbReference>
<dbReference type="GO" id="GO:0019843">
    <property type="term" value="F:rRNA binding"/>
    <property type="evidence" value="ECO:0007669"/>
    <property type="project" value="UniProtKB-UniRule"/>
</dbReference>
<dbReference type="GO" id="GO:0003735">
    <property type="term" value="F:structural constituent of ribosome"/>
    <property type="evidence" value="ECO:0007669"/>
    <property type="project" value="InterPro"/>
</dbReference>
<dbReference type="GO" id="GO:0006412">
    <property type="term" value="P:translation"/>
    <property type="evidence" value="ECO:0007669"/>
    <property type="project" value="UniProtKB-UniRule"/>
</dbReference>
<dbReference type="FunFam" id="3.40.5.10:FF:000002">
    <property type="entry name" value="50S ribosomal protein L9"/>
    <property type="match status" value="1"/>
</dbReference>
<dbReference type="Gene3D" id="3.10.430.100">
    <property type="entry name" value="Ribosomal protein L9, C-terminal domain"/>
    <property type="match status" value="1"/>
</dbReference>
<dbReference type="Gene3D" id="3.40.5.10">
    <property type="entry name" value="Ribosomal protein L9, N-terminal domain"/>
    <property type="match status" value="1"/>
</dbReference>
<dbReference type="HAMAP" id="MF_00503">
    <property type="entry name" value="Ribosomal_bL9"/>
    <property type="match status" value="1"/>
</dbReference>
<dbReference type="InterPro" id="IPR000244">
    <property type="entry name" value="Ribosomal_bL9"/>
</dbReference>
<dbReference type="InterPro" id="IPR009027">
    <property type="entry name" value="Ribosomal_bL9/RNase_H1_N"/>
</dbReference>
<dbReference type="InterPro" id="IPR020594">
    <property type="entry name" value="Ribosomal_bL9_bac/chp"/>
</dbReference>
<dbReference type="InterPro" id="IPR020069">
    <property type="entry name" value="Ribosomal_bL9_C"/>
</dbReference>
<dbReference type="InterPro" id="IPR036791">
    <property type="entry name" value="Ribosomal_bL9_C_sf"/>
</dbReference>
<dbReference type="InterPro" id="IPR020070">
    <property type="entry name" value="Ribosomal_bL9_N"/>
</dbReference>
<dbReference type="InterPro" id="IPR036935">
    <property type="entry name" value="Ribosomal_bL9_N_sf"/>
</dbReference>
<dbReference type="NCBIfam" id="TIGR00158">
    <property type="entry name" value="L9"/>
    <property type="match status" value="1"/>
</dbReference>
<dbReference type="PANTHER" id="PTHR21368">
    <property type="entry name" value="50S RIBOSOMAL PROTEIN L9"/>
    <property type="match status" value="1"/>
</dbReference>
<dbReference type="Pfam" id="PF03948">
    <property type="entry name" value="Ribosomal_L9_C"/>
    <property type="match status" value="1"/>
</dbReference>
<dbReference type="Pfam" id="PF01281">
    <property type="entry name" value="Ribosomal_L9_N"/>
    <property type="match status" value="1"/>
</dbReference>
<dbReference type="SUPFAM" id="SSF55658">
    <property type="entry name" value="L9 N-domain-like"/>
    <property type="match status" value="1"/>
</dbReference>
<dbReference type="SUPFAM" id="SSF55653">
    <property type="entry name" value="Ribosomal protein L9 C-domain"/>
    <property type="match status" value="1"/>
</dbReference>
<dbReference type="PROSITE" id="PS00651">
    <property type="entry name" value="RIBOSOMAL_L9"/>
    <property type="match status" value="1"/>
</dbReference>
<sequence length="150" mass="16512">MKVIFLADVKGKGKKGEIKEVPTGYAQNFLIKKNLAKEATSQSIGELKGKQKAEEKAQAEILAEAQAVKAVLDEDKTRVQFQEKVGPDGRTFGSITAKKISEELQKQFGVKVDKRHIVLDHPIRAIGLIEVPVKLHKEVTAEIKLAITEA</sequence>
<proteinExistence type="inferred from homology"/>
<accession>P0DE61</accession>
<accession>P66323</accession>
<accession>Q99XJ0</accession>
<protein>
    <recommendedName>
        <fullName evidence="1">Large ribosomal subunit protein bL9</fullName>
    </recommendedName>
    <alternativeName>
        <fullName evidence="2">50S ribosomal protein L9</fullName>
    </alternativeName>
</protein>
<gene>
    <name evidence="1" type="primary">rplI</name>
    <name type="ordered locus">SPs1832</name>
</gene>
<keyword id="KW-0687">Ribonucleoprotein</keyword>
<keyword id="KW-0689">Ribosomal protein</keyword>
<keyword id="KW-0694">RNA-binding</keyword>
<keyword id="KW-0699">rRNA-binding</keyword>
<feature type="chain" id="PRO_0000411520" description="Large ribosomal subunit protein bL9">
    <location>
        <begin position="1"/>
        <end position="150"/>
    </location>
</feature>
<reference key="1">
    <citation type="journal article" date="2003" name="Genome Res.">
        <title>Genome sequence of an M3 strain of Streptococcus pyogenes reveals a large-scale genomic rearrangement in invasive strains and new insights into phage evolution.</title>
        <authorList>
            <person name="Nakagawa I."/>
            <person name="Kurokawa K."/>
            <person name="Yamashita A."/>
            <person name="Nakata M."/>
            <person name="Tomiyasu Y."/>
            <person name="Okahashi N."/>
            <person name="Kawabata S."/>
            <person name="Yamazaki K."/>
            <person name="Shiba T."/>
            <person name="Yasunaga T."/>
            <person name="Hayashi H."/>
            <person name="Hattori M."/>
            <person name="Hamada S."/>
        </authorList>
    </citation>
    <scope>NUCLEOTIDE SEQUENCE [LARGE SCALE GENOMIC DNA]</scope>
    <source>
        <strain>SSI-1</strain>
    </source>
</reference>
<comment type="function">
    <text evidence="1">Binds to the 23S rRNA.</text>
</comment>
<comment type="similarity">
    <text evidence="1">Belongs to the bacterial ribosomal protein bL9 family.</text>
</comment>
<evidence type="ECO:0000255" key="1">
    <source>
        <dbReference type="HAMAP-Rule" id="MF_00503"/>
    </source>
</evidence>
<evidence type="ECO:0000305" key="2"/>
<organism>
    <name type="scientific">Streptococcus pyogenes serotype M3 (strain SSI-1)</name>
    <dbReference type="NCBI Taxonomy" id="193567"/>
    <lineage>
        <taxon>Bacteria</taxon>
        <taxon>Bacillati</taxon>
        <taxon>Bacillota</taxon>
        <taxon>Bacilli</taxon>
        <taxon>Lactobacillales</taxon>
        <taxon>Streptococcaceae</taxon>
        <taxon>Streptococcus</taxon>
    </lineage>
</organism>